<keyword id="KW-1185">Reference proteome</keyword>
<keyword id="KW-0687">Ribonucleoprotein</keyword>
<keyword id="KW-0689">Ribosomal protein</keyword>
<comment type="similarity">
    <text evidence="1">Belongs to the bacterial ribosomal protein bL32 family.</text>
</comment>
<gene>
    <name evidence="1" type="primary">rpmF</name>
    <name type="ordered locus">CHAB381_1490</name>
</gene>
<feature type="chain" id="PRO_1000005054" description="Large ribosomal subunit protein bL32">
    <location>
        <begin position="1"/>
        <end position="48"/>
    </location>
</feature>
<feature type="region of interest" description="Disordered" evidence="2">
    <location>
        <begin position="1"/>
        <end position="48"/>
    </location>
</feature>
<feature type="compositionally biased region" description="Basic residues" evidence="2">
    <location>
        <begin position="1"/>
        <end position="20"/>
    </location>
</feature>
<dbReference type="EMBL" id="CP000776">
    <property type="protein sequence ID" value="ABS51030.1"/>
    <property type="molecule type" value="Genomic_DNA"/>
</dbReference>
<dbReference type="RefSeq" id="WP_012109329.1">
    <property type="nucleotide sequence ID" value="NC_009714.1"/>
</dbReference>
<dbReference type="SMR" id="A7I3D4"/>
<dbReference type="STRING" id="360107.CHAB381_1490"/>
<dbReference type="KEGG" id="cha:CHAB381_1490"/>
<dbReference type="eggNOG" id="COG0333">
    <property type="taxonomic scope" value="Bacteria"/>
</dbReference>
<dbReference type="HOGENOM" id="CLU_129084_1_2_7"/>
<dbReference type="OrthoDB" id="9801927at2"/>
<dbReference type="Proteomes" id="UP000002407">
    <property type="component" value="Chromosome"/>
</dbReference>
<dbReference type="GO" id="GO:0015934">
    <property type="term" value="C:large ribosomal subunit"/>
    <property type="evidence" value="ECO:0007669"/>
    <property type="project" value="InterPro"/>
</dbReference>
<dbReference type="GO" id="GO:0003735">
    <property type="term" value="F:structural constituent of ribosome"/>
    <property type="evidence" value="ECO:0007669"/>
    <property type="project" value="InterPro"/>
</dbReference>
<dbReference type="GO" id="GO:0006412">
    <property type="term" value="P:translation"/>
    <property type="evidence" value="ECO:0007669"/>
    <property type="project" value="UniProtKB-UniRule"/>
</dbReference>
<dbReference type="HAMAP" id="MF_00340">
    <property type="entry name" value="Ribosomal_bL32"/>
    <property type="match status" value="1"/>
</dbReference>
<dbReference type="InterPro" id="IPR002677">
    <property type="entry name" value="Ribosomal_bL32"/>
</dbReference>
<dbReference type="InterPro" id="IPR044957">
    <property type="entry name" value="Ribosomal_bL32_bact"/>
</dbReference>
<dbReference type="InterPro" id="IPR011332">
    <property type="entry name" value="Ribosomal_zn-bd"/>
</dbReference>
<dbReference type="NCBIfam" id="TIGR01031">
    <property type="entry name" value="rpmF_bact"/>
    <property type="match status" value="1"/>
</dbReference>
<dbReference type="PANTHER" id="PTHR35534">
    <property type="entry name" value="50S RIBOSOMAL PROTEIN L32"/>
    <property type="match status" value="1"/>
</dbReference>
<dbReference type="PANTHER" id="PTHR35534:SF1">
    <property type="entry name" value="LARGE RIBOSOMAL SUBUNIT PROTEIN BL32"/>
    <property type="match status" value="1"/>
</dbReference>
<dbReference type="Pfam" id="PF01783">
    <property type="entry name" value="Ribosomal_L32p"/>
    <property type="match status" value="1"/>
</dbReference>
<dbReference type="SUPFAM" id="SSF57829">
    <property type="entry name" value="Zn-binding ribosomal proteins"/>
    <property type="match status" value="1"/>
</dbReference>
<sequence>MAVPKRRVSKTRAAKRRTHYKVSLPIPVKDKDGSWKLPHRINTKTGEY</sequence>
<protein>
    <recommendedName>
        <fullName evidence="1">Large ribosomal subunit protein bL32</fullName>
    </recommendedName>
    <alternativeName>
        <fullName evidence="3">50S ribosomal protein L32</fullName>
    </alternativeName>
</protein>
<proteinExistence type="inferred from homology"/>
<reference key="1">
    <citation type="submission" date="2007-07" db="EMBL/GenBank/DDBJ databases">
        <title>Complete genome sequence of Campylobacter hominis ATCC BAA-381, a commensal isolated from the human gastrointestinal tract.</title>
        <authorList>
            <person name="Fouts D.E."/>
            <person name="Mongodin E.F."/>
            <person name="Puiu D."/>
            <person name="Sebastian Y."/>
            <person name="Miller W.G."/>
            <person name="Mandrell R.E."/>
            <person name="Nelson K.E."/>
        </authorList>
    </citation>
    <scope>NUCLEOTIDE SEQUENCE [LARGE SCALE GENOMIC DNA]</scope>
    <source>
        <strain>ATCC BAA-381 / DSM 21671 / CCUG 45161 / LMG 19568 / NCTC 13146 / CH001A</strain>
    </source>
</reference>
<name>RL32_CAMHC</name>
<accession>A7I3D4</accession>
<evidence type="ECO:0000255" key="1">
    <source>
        <dbReference type="HAMAP-Rule" id="MF_00340"/>
    </source>
</evidence>
<evidence type="ECO:0000256" key="2">
    <source>
        <dbReference type="SAM" id="MobiDB-lite"/>
    </source>
</evidence>
<evidence type="ECO:0000305" key="3"/>
<organism>
    <name type="scientific">Campylobacter hominis (strain ATCC BAA-381 / DSM 21671 / CCUG 45161 / LMG 19568 / NCTC 13146 / CH001A)</name>
    <dbReference type="NCBI Taxonomy" id="360107"/>
    <lineage>
        <taxon>Bacteria</taxon>
        <taxon>Pseudomonadati</taxon>
        <taxon>Campylobacterota</taxon>
        <taxon>Epsilonproteobacteria</taxon>
        <taxon>Campylobacterales</taxon>
        <taxon>Campylobacteraceae</taxon>
        <taxon>Campylobacter</taxon>
    </lineage>
</organism>